<organism>
    <name type="scientific">Mus musculus</name>
    <name type="common">Mouse</name>
    <dbReference type="NCBI Taxonomy" id="10090"/>
    <lineage>
        <taxon>Eukaryota</taxon>
        <taxon>Metazoa</taxon>
        <taxon>Chordata</taxon>
        <taxon>Craniata</taxon>
        <taxon>Vertebrata</taxon>
        <taxon>Euteleostomi</taxon>
        <taxon>Mammalia</taxon>
        <taxon>Eutheria</taxon>
        <taxon>Euarchontoglires</taxon>
        <taxon>Glires</taxon>
        <taxon>Rodentia</taxon>
        <taxon>Myomorpha</taxon>
        <taxon>Muroidea</taxon>
        <taxon>Muridae</taxon>
        <taxon>Murinae</taxon>
        <taxon>Mus</taxon>
        <taxon>Mus</taxon>
    </lineage>
</organism>
<proteinExistence type="evidence at protein level"/>
<feature type="chain" id="PRO_0000264464" description="Immunity-related GTPase family Q protein">
    <location>
        <begin position="1"/>
        <end position="583"/>
    </location>
</feature>
<feature type="domain" description="IRG-type G" evidence="3">
    <location>
        <begin position="223"/>
        <end position="409"/>
    </location>
</feature>
<feature type="region of interest" description="Disordered" evidence="4">
    <location>
        <begin position="322"/>
        <end position="373"/>
    </location>
</feature>
<feature type="coiled-coil region" evidence="2">
    <location>
        <begin position="155"/>
        <end position="179"/>
    </location>
</feature>
<feature type="short sequence motif" description="LIR 1" evidence="1">
    <location>
        <begin position="186"/>
        <end position="189"/>
    </location>
</feature>
<feature type="short sequence motif" description="LIR 2" evidence="1">
    <location>
        <begin position="381"/>
        <end position="384"/>
    </location>
</feature>
<feature type="compositionally biased region" description="Acidic residues" evidence="4">
    <location>
        <begin position="332"/>
        <end position="341"/>
    </location>
</feature>
<feature type="modified residue" description="Phosphothreonine" evidence="1">
    <location>
        <position position="203"/>
    </location>
</feature>
<feature type="disulfide bond" evidence="1">
    <location>
        <begin position="152"/>
        <end position="158"/>
    </location>
</feature>
<feature type="sequence conflict" description="In Ref. 2; AAH56347." evidence="6" ref="2">
    <original>P</original>
    <variation>T</variation>
    <location>
        <position position="510"/>
    </location>
</feature>
<keyword id="KW-0072">Autophagy</keyword>
<keyword id="KW-0175">Coiled coil</keyword>
<keyword id="KW-0968">Cytoplasmic vesicle</keyword>
<keyword id="KW-1015">Disulfide bond</keyword>
<keyword id="KW-1017">Isopeptide bond</keyword>
<keyword id="KW-0458">Lysosome</keyword>
<keyword id="KW-0597">Phosphoprotein</keyword>
<keyword id="KW-1185">Reference proteome</keyword>
<reference key="1">
    <citation type="submission" date="2000-11" db="EMBL/GenBank/DDBJ databases">
        <title>Molecular cloning of FKSG27, a novel gene related to cervical tumor.</title>
        <authorList>
            <person name="Wang Y.-G."/>
            <person name="Gong L."/>
        </authorList>
    </citation>
    <scope>NUCLEOTIDE SEQUENCE [MRNA]</scope>
</reference>
<reference key="2">
    <citation type="journal article" date="2004" name="Genome Res.">
        <title>The status, quality, and expansion of the NIH full-length cDNA project: the Mammalian Gene Collection (MGC).</title>
        <authorList>
            <consortium name="The MGC Project Team"/>
        </authorList>
    </citation>
    <scope>NUCLEOTIDE SEQUENCE [LARGE SCALE MRNA]</scope>
    <source>
        <strain>C57BL/6J</strain>
        <tissue>Brain</tissue>
    </source>
</reference>
<reference key="3">
    <citation type="journal article" date="2010" name="Cell">
        <title>A tissue-specific atlas of mouse protein phosphorylation and expression.</title>
        <authorList>
            <person name="Huttlin E.L."/>
            <person name="Jedrychowski M.P."/>
            <person name="Elias J.E."/>
            <person name="Goswami T."/>
            <person name="Rad R."/>
            <person name="Beausoleil S.A."/>
            <person name="Villen J."/>
            <person name="Haas W."/>
            <person name="Sowa M.E."/>
            <person name="Gygi S.P."/>
        </authorList>
    </citation>
    <scope>IDENTIFICATION BY MASS SPECTROMETRY [LARGE SCALE ANALYSIS]</scope>
    <source>
        <tissue>Brain</tissue>
        <tissue>Liver</tissue>
        <tissue>Spleen</tissue>
    </source>
</reference>
<reference key="4">
    <citation type="journal article" date="2024" name="Cell">
        <title>IRGQ-mediated autophagy in MHC class I quality control promotes tumor immune evasion.</title>
        <authorList>
            <person name="Herhaus L."/>
            <person name="Gestal-Mato U."/>
            <person name="Eapen V.V."/>
            <person name="Macinkovic I."/>
            <person name="Bailey H.J."/>
            <person name="Prieto-Garcia C."/>
            <person name="Misra M."/>
            <person name="Jacomin A.C."/>
            <person name="Ammanath A.V."/>
            <person name="Bagaric I."/>
            <person name="Michaelis J."/>
            <person name="Vollrath J."/>
            <person name="Bhaskara R.M."/>
            <person name="Buendgen G."/>
            <person name="Covarrubias-Pinto A."/>
            <person name="Husnjak K."/>
            <person name="Zoeller J."/>
            <person name="Gikandi A."/>
            <person name="Ribicic S."/>
            <person name="Bopp T."/>
            <person name="van der Heden van Noort G.J."/>
            <person name="Langer J.D."/>
            <person name="Weigert A."/>
            <person name="Harper J.W."/>
            <person name="Mancias J.D."/>
            <person name="Dikic I."/>
        </authorList>
    </citation>
    <scope>FUNCTION</scope>
    <scope>DISRUPTION PHENOTYPE</scope>
</reference>
<name>IRGQ_MOUSE</name>
<comment type="function">
    <text evidence="1 5">Autophagy receptor that specifically promotes clearance of misfolded MHC class I molecules by targeting them to the lysosome for degradation (By similarity). Acts as a molecular adapter that specifically recognizes and binds (1) misfolded MHC class I molecules following their ubiquitination, as well as (2) autophagy-related proteins, promoting the recruitment of misfolded MHC class I molecules to autophagy machinery for degradation (By similarity). Degradation of misfolded MHC class I molecules is essential to prevent accumulation of defective MHC class I complexes at the surface of CD8(+) T-cells and prevent a stronger T-cell-mediated response (PubMed:39481378). In contrast to other members of the family, does not show GTPase activity (By similarity).</text>
</comment>
<comment type="subunit">
    <text evidence="1">Interacts (via LIR motif 1) with GABARAPL2. Interacts (via LIR motif 2) with MAP1LC3B/LC3B.</text>
</comment>
<comment type="subcellular location">
    <subcellularLocation>
        <location evidence="1">Lysosome</location>
    </subcellularLocation>
    <subcellularLocation>
        <location evidence="1">Cytoplasmic vesicle</location>
        <location evidence="1">Autophagosome</location>
    </subcellularLocation>
</comment>
<comment type="domain">
    <text evidence="1">The LIR motifs (LC3-interacting region) are required for the interaction with ATG8 family proteins GABARAPL2 and MAP1LC3B/LC3B.</text>
</comment>
<comment type="disruption phenotype">
    <text evidence="5">Increased CD8(+) T-cell response.</text>
</comment>
<comment type="similarity">
    <text evidence="3 6">Belongs to the TRAFAC class dynamin-like GTPase superfamily. IRG family.</text>
</comment>
<gene>
    <name type="primary">Irgq</name>
    <name type="synonym">Irgq1</name>
    <name type="ORF">Fksg27</name>
</gene>
<sequence length="583" mass="59323">MPLPQGDVTALFLGPPGSGKSALIAALCGKNVDTVEIPDGRQDSGVPSLRAAAPGLFLGELSCPPAAPGPWAAEANLLVLVLPGSEGSEEPLTPALGEAARAALARGTPLLAVRNLRPGDSQNAAKARDETAALLNSAGLGAAPLFVPPADCSSSDRCEELERLQVVLRTQAEALQRLLPPAQDGFEVLGAAELEAVREAFETGGLEAALSWVRAGLERLGSARLDLAVAGTTNVGLVLDMLLGLDPGDPGAAPASAPTGPTPYPAPERPNVVLWTVPLGPTATSPAVTPHPTHYDALILVTPGAPTEENWAQVRSLVSPDAPLVGVRTDGQGEDPPEVLEEEKAQNASDGNSGDARSEGKKAGIGDSGCTAARSPEDELWEVLEEAPPPVFPMRPGGLPGLGTWLQHALPTAQAGALLLALPPASPRAARRKAAALRAGAWRPALLASLAAAAAPVPGLGWACDVALLRGQLAEWRRALGLEPAAVARRERALGLAPGVLATRTRFPGPVTRAEVEARLGSWAGEGTAGGAALSALSFLWPTGGAAATGGLGYRAAHGVLLQALDEMLADAEAVLGPPEPNQ</sequence>
<protein>
    <recommendedName>
        <fullName>Immunity-related GTPase family Q protein</fullName>
    </recommendedName>
</protein>
<dbReference type="EMBL" id="AF322649">
    <property type="protein sequence ID" value="AAL33885.1"/>
    <property type="molecule type" value="mRNA"/>
</dbReference>
<dbReference type="EMBL" id="BC056347">
    <property type="protein sequence ID" value="AAH56347.1"/>
    <property type="molecule type" value="mRNA"/>
</dbReference>
<dbReference type="EMBL" id="BC080294">
    <property type="protein sequence ID" value="AAH80294.1"/>
    <property type="molecule type" value="mRNA"/>
</dbReference>
<dbReference type="CCDS" id="CCDS20953.1"/>
<dbReference type="RefSeq" id="NP_694774.3">
    <property type="nucleotide sequence ID" value="NM_153134.3"/>
</dbReference>
<dbReference type="SMR" id="Q8VIM9"/>
<dbReference type="BioGRID" id="229136">
    <property type="interactions" value="7"/>
</dbReference>
<dbReference type="FunCoup" id="Q8VIM9">
    <property type="interactions" value="64"/>
</dbReference>
<dbReference type="STRING" id="10090.ENSMUSP00000036699"/>
<dbReference type="GlyGen" id="Q8VIM9">
    <property type="glycosylation" value="2 sites"/>
</dbReference>
<dbReference type="iPTMnet" id="Q8VIM9"/>
<dbReference type="PhosphoSitePlus" id="Q8VIM9"/>
<dbReference type="PaxDb" id="10090-ENSMUSP00000036699"/>
<dbReference type="PeptideAtlas" id="Q8VIM9"/>
<dbReference type="ProteomicsDB" id="269096"/>
<dbReference type="Pumba" id="Q8VIM9"/>
<dbReference type="Antibodypedia" id="48982">
    <property type="antibodies" value="97 antibodies from 19 providers"/>
</dbReference>
<dbReference type="Ensembl" id="ENSMUST00000049020.9">
    <property type="protein sequence ID" value="ENSMUSP00000036699.8"/>
    <property type="gene ID" value="ENSMUSG00000041037.9"/>
</dbReference>
<dbReference type="GeneID" id="210146"/>
<dbReference type="KEGG" id="mmu:210146"/>
<dbReference type="UCSC" id="uc009fpv.2">
    <property type="organism name" value="mouse"/>
</dbReference>
<dbReference type="AGR" id="MGI:2667176"/>
<dbReference type="CTD" id="126298"/>
<dbReference type="MGI" id="MGI:2667176">
    <property type="gene designation" value="Irgq"/>
</dbReference>
<dbReference type="VEuPathDB" id="HostDB:ENSMUSG00000041037"/>
<dbReference type="eggNOG" id="ENOG502RY8G">
    <property type="taxonomic scope" value="Eukaryota"/>
</dbReference>
<dbReference type="GeneTree" id="ENSGT00510000048991"/>
<dbReference type="HOGENOM" id="CLU_037636_0_0_1"/>
<dbReference type="InParanoid" id="Q8VIM9"/>
<dbReference type="OMA" id="RTHFPGP"/>
<dbReference type="OrthoDB" id="9837823at2759"/>
<dbReference type="PhylomeDB" id="Q8VIM9"/>
<dbReference type="TreeFam" id="TF331897"/>
<dbReference type="BioGRID-ORCS" id="210146">
    <property type="hits" value="3 hits in 77 CRISPR screens"/>
</dbReference>
<dbReference type="ChiTaRS" id="Irgq">
    <property type="organism name" value="mouse"/>
</dbReference>
<dbReference type="PRO" id="PR:Q8VIM9"/>
<dbReference type="Proteomes" id="UP000000589">
    <property type="component" value="Chromosome 7"/>
</dbReference>
<dbReference type="RNAct" id="Q8VIM9">
    <property type="molecule type" value="protein"/>
</dbReference>
<dbReference type="Bgee" id="ENSMUSG00000041037">
    <property type="expression patterns" value="Expressed in floor plate of midbrain and 225 other cell types or tissues"/>
</dbReference>
<dbReference type="GO" id="GO:0005776">
    <property type="term" value="C:autophagosome"/>
    <property type="evidence" value="ECO:0000250"/>
    <property type="project" value="UniProtKB"/>
</dbReference>
<dbReference type="GO" id="GO:0005764">
    <property type="term" value="C:lysosome"/>
    <property type="evidence" value="ECO:0000250"/>
    <property type="project" value="UniProtKB"/>
</dbReference>
<dbReference type="GO" id="GO:0030674">
    <property type="term" value="F:protein-macromolecule adaptor activity"/>
    <property type="evidence" value="ECO:0000250"/>
    <property type="project" value="UniProtKB"/>
</dbReference>
<dbReference type="GO" id="GO:0010508">
    <property type="term" value="P:positive regulation of autophagy"/>
    <property type="evidence" value="ECO:0000250"/>
    <property type="project" value="UniProtKB"/>
</dbReference>
<dbReference type="GO" id="GO:0006515">
    <property type="term" value="P:protein quality control for misfolded or incompletely synthesized proteins"/>
    <property type="evidence" value="ECO:0000250"/>
    <property type="project" value="UniProtKB"/>
</dbReference>
<dbReference type="GO" id="GO:0061753">
    <property type="term" value="P:substrate localization to autophagosome"/>
    <property type="evidence" value="ECO:0000250"/>
    <property type="project" value="UniProtKB"/>
</dbReference>
<dbReference type="InterPro" id="IPR030385">
    <property type="entry name" value="G_IRG_dom"/>
</dbReference>
<dbReference type="InterPro" id="IPR040070">
    <property type="entry name" value="IRGQ"/>
</dbReference>
<dbReference type="PANTHER" id="PTHR19364">
    <property type="entry name" value="IMMUNITY-RELATED GTPASE FAMILY Q PROTEIN"/>
    <property type="match status" value="1"/>
</dbReference>
<dbReference type="PANTHER" id="PTHR19364:SF2">
    <property type="entry name" value="IMMUNITY-RELATED GTPASE FAMILY Q PROTEIN"/>
    <property type="match status" value="1"/>
</dbReference>
<dbReference type="PROSITE" id="PS51716">
    <property type="entry name" value="G_IRG"/>
    <property type="match status" value="1"/>
</dbReference>
<accession>Q8VIM9</accession>
<accession>Q7TNC7</accession>
<evidence type="ECO:0000250" key="1">
    <source>
        <dbReference type="UniProtKB" id="Q8WZA9"/>
    </source>
</evidence>
<evidence type="ECO:0000255" key="2"/>
<evidence type="ECO:0000255" key="3">
    <source>
        <dbReference type="PROSITE-ProRule" id="PRU01053"/>
    </source>
</evidence>
<evidence type="ECO:0000256" key="4">
    <source>
        <dbReference type="SAM" id="MobiDB-lite"/>
    </source>
</evidence>
<evidence type="ECO:0000269" key="5">
    <source>
    </source>
</evidence>
<evidence type="ECO:0000305" key="6"/>